<name>RSGA_LACJO</name>
<sequence>MKKAEGTIISAISGYYDVEIDNKVVRTRARGVFRDRKQKPLVGDRVVVQLDDQGMNYLIEILPRINEIGRPAVANVSRVLLVISAVEPDFSLELLDRYLTFFAWKNVGVVIYLSKSDITSSERLKDIQTELEYYQRIGYPVFEDAEKLENELPKMIDKDQIWTLAGQSGAGKSTLLNQLESEAKQVTGAISTALNRGKHTTRQVTLFKYGSGFIADTPGFSAIDLFKIKVDDLRNYFYDLKEASANCKFRGCQHIKEPGCEVKKLVEEGKIARSRYESYLKIRQEISDNRMPEYLKK</sequence>
<reference key="1">
    <citation type="journal article" date="2004" name="Proc. Natl. Acad. Sci. U.S.A.">
        <title>The genome sequence of the probiotic intestinal bacterium Lactobacillus johnsonii NCC 533.</title>
        <authorList>
            <person name="Pridmore R.D."/>
            <person name="Berger B."/>
            <person name="Desiere F."/>
            <person name="Vilanova D."/>
            <person name="Barretto C."/>
            <person name="Pittet A.-C."/>
            <person name="Zwahlen M.-C."/>
            <person name="Rouvet M."/>
            <person name="Altermann E."/>
            <person name="Barrangou R."/>
            <person name="Mollet B."/>
            <person name="Mercenier A."/>
            <person name="Klaenhammer T."/>
            <person name="Arigoni F."/>
            <person name="Schell M.A."/>
        </authorList>
    </citation>
    <scope>NUCLEOTIDE SEQUENCE [LARGE SCALE GENOMIC DNA]</scope>
    <source>
        <strain>CNCM I-1225 / La1 / NCC 533</strain>
    </source>
</reference>
<keyword id="KW-0963">Cytoplasm</keyword>
<keyword id="KW-0342">GTP-binding</keyword>
<keyword id="KW-0378">Hydrolase</keyword>
<keyword id="KW-0479">Metal-binding</keyword>
<keyword id="KW-0547">Nucleotide-binding</keyword>
<keyword id="KW-0690">Ribosome biogenesis</keyword>
<keyword id="KW-0694">RNA-binding</keyword>
<keyword id="KW-0699">rRNA-binding</keyword>
<keyword id="KW-0862">Zinc</keyword>
<gene>
    <name evidence="1" type="primary">rsgA</name>
    <name type="ordered locus">LJ_1536</name>
</gene>
<comment type="function">
    <text evidence="1">One of several proteins that assist in the late maturation steps of the functional core of the 30S ribosomal subunit. Helps release RbfA from mature subunits. May play a role in the assembly of ribosomal proteins into the subunit. Circularly permuted GTPase that catalyzes slow GTP hydrolysis, GTPase activity is stimulated by the 30S ribosomal subunit.</text>
</comment>
<comment type="cofactor">
    <cofactor evidence="1">
        <name>Zn(2+)</name>
        <dbReference type="ChEBI" id="CHEBI:29105"/>
    </cofactor>
    <text evidence="1">Binds 1 zinc ion per subunit.</text>
</comment>
<comment type="subunit">
    <text evidence="1">Monomer. Associates with 30S ribosomal subunit, binds 16S rRNA.</text>
</comment>
<comment type="subcellular location">
    <subcellularLocation>
        <location evidence="1">Cytoplasm</location>
    </subcellularLocation>
</comment>
<comment type="similarity">
    <text evidence="1">Belongs to the TRAFAC class YlqF/YawG GTPase family. RsgA subfamily.</text>
</comment>
<feature type="chain" id="PRO_0000171481" description="Small ribosomal subunit biogenesis GTPase RsgA">
    <location>
        <begin position="1"/>
        <end position="297"/>
    </location>
</feature>
<feature type="domain" description="CP-type G" evidence="2">
    <location>
        <begin position="65"/>
        <end position="223"/>
    </location>
</feature>
<feature type="binding site" evidence="1">
    <location>
        <begin position="114"/>
        <end position="117"/>
    </location>
    <ligand>
        <name>GTP</name>
        <dbReference type="ChEBI" id="CHEBI:37565"/>
    </ligand>
</feature>
<feature type="binding site" evidence="1">
    <location>
        <begin position="166"/>
        <end position="174"/>
    </location>
    <ligand>
        <name>GTP</name>
        <dbReference type="ChEBI" id="CHEBI:37565"/>
    </ligand>
</feature>
<feature type="binding site" evidence="1">
    <location>
        <position position="247"/>
    </location>
    <ligand>
        <name>Zn(2+)</name>
        <dbReference type="ChEBI" id="CHEBI:29105"/>
    </ligand>
</feature>
<feature type="binding site" evidence="1">
    <location>
        <position position="252"/>
    </location>
    <ligand>
        <name>Zn(2+)</name>
        <dbReference type="ChEBI" id="CHEBI:29105"/>
    </ligand>
</feature>
<feature type="binding site" evidence="1">
    <location>
        <position position="254"/>
    </location>
    <ligand>
        <name>Zn(2+)</name>
        <dbReference type="ChEBI" id="CHEBI:29105"/>
    </ligand>
</feature>
<feature type="binding site" evidence="1">
    <location>
        <position position="260"/>
    </location>
    <ligand>
        <name>Zn(2+)</name>
        <dbReference type="ChEBI" id="CHEBI:29105"/>
    </ligand>
</feature>
<accession>Q74IN3</accession>
<dbReference type="EC" id="3.6.1.-" evidence="1"/>
<dbReference type="EMBL" id="AE017198">
    <property type="protein sequence ID" value="AAS09304.1"/>
    <property type="molecule type" value="Genomic_DNA"/>
</dbReference>
<dbReference type="RefSeq" id="WP_011162260.1">
    <property type="nucleotide sequence ID" value="NC_005362.1"/>
</dbReference>
<dbReference type="SMR" id="Q74IN3"/>
<dbReference type="KEGG" id="ljo:LJ_1536"/>
<dbReference type="PATRIC" id="fig|257314.6.peg.1354"/>
<dbReference type="eggNOG" id="COG1162">
    <property type="taxonomic scope" value="Bacteria"/>
</dbReference>
<dbReference type="HOGENOM" id="CLU_033617_2_1_9"/>
<dbReference type="Proteomes" id="UP000000581">
    <property type="component" value="Chromosome"/>
</dbReference>
<dbReference type="GO" id="GO:0005737">
    <property type="term" value="C:cytoplasm"/>
    <property type="evidence" value="ECO:0007669"/>
    <property type="project" value="UniProtKB-SubCell"/>
</dbReference>
<dbReference type="GO" id="GO:0005525">
    <property type="term" value="F:GTP binding"/>
    <property type="evidence" value="ECO:0007669"/>
    <property type="project" value="UniProtKB-UniRule"/>
</dbReference>
<dbReference type="GO" id="GO:0003924">
    <property type="term" value="F:GTPase activity"/>
    <property type="evidence" value="ECO:0007669"/>
    <property type="project" value="UniProtKB-UniRule"/>
</dbReference>
<dbReference type="GO" id="GO:0046872">
    <property type="term" value="F:metal ion binding"/>
    <property type="evidence" value="ECO:0007669"/>
    <property type="project" value="UniProtKB-KW"/>
</dbReference>
<dbReference type="GO" id="GO:0019843">
    <property type="term" value="F:rRNA binding"/>
    <property type="evidence" value="ECO:0007669"/>
    <property type="project" value="UniProtKB-KW"/>
</dbReference>
<dbReference type="GO" id="GO:0042274">
    <property type="term" value="P:ribosomal small subunit biogenesis"/>
    <property type="evidence" value="ECO:0007669"/>
    <property type="project" value="UniProtKB-UniRule"/>
</dbReference>
<dbReference type="CDD" id="cd04466">
    <property type="entry name" value="S1_YloQ_GTPase"/>
    <property type="match status" value="1"/>
</dbReference>
<dbReference type="CDD" id="cd01854">
    <property type="entry name" value="YjeQ_EngC"/>
    <property type="match status" value="1"/>
</dbReference>
<dbReference type="Gene3D" id="2.40.50.140">
    <property type="entry name" value="Nucleic acid-binding proteins"/>
    <property type="match status" value="1"/>
</dbReference>
<dbReference type="Gene3D" id="3.40.50.300">
    <property type="entry name" value="P-loop containing nucleotide triphosphate hydrolases"/>
    <property type="match status" value="1"/>
</dbReference>
<dbReference type="Gene3D" id="1.10.40.50">
    <property type="entry name" value="Probable gtpase engc, domain 3"/>
    <property type="match status" value="1"/>
</dbReference>
<dbReference type="HAMAP" id="MF_01820">
    <property type="entry name" value="GTPase_RsgA"/>
    <property type="match status" value="1"/>
</dbReference>
<dbReference type="InterPro" id="IPR030378">
    <property type="entry name" value="G_CP_dom"/>
</dbReference>
<dbReference type="InterPro" id="IPR012340">
    <property type="entry name" value="NA-bd_OB-fold"/>
</dbReference>
<dbReference type="InterPro" id="IPR027417">
    <property type="entry name" value="P-loop_NTPase"/>
</dbReference>
<dbReference type="InterPro" id="IPR004881">
    <property type="entry name" value="Ribosome_biogen_GTPase_RsgA"/>
</dbReference>
<dbReference type="InterPro" id="IPR010914">
    <property type="entry name" value="RsgA_GTPase_dom"/>
</dbReference>
<dbReference type="InterPro" id="IPR031944">
    <property type="entry name" value="RsgA_N"/>
</dbReference>
<dbReference type="NCBIfam" id="TIGR00157">
    <property type="entry name" value="ribosome small subunit-dependent GTPase A"/>
    <property type="match status" value="1"/>
</dbReference>
<dbReference type="PANTHER" id="PTHR32120">
    <property type="entry name" value="SMALL RIBOSOMAL SUBUNIT BIOGENESIS GTPASE RSGA"/>
    <property type="match status" value="1"/>
</dbReference>
<dbReference type="PANTHER" id="PTHR32120:SF11">
    <property type="entry name" value="SMALL RIBOSOMAL SUBUNIT BIOGENESIS GTPASE RSGA 1, MITOCHONDRIAL-RELATED"/>
    <property type="match status" value="1"/>
</dbReference>
<dbReference type="Pfam" id="PF03193">
    <property type="entry name" value="RsgA_GTPase"/>
    <property type="match status" value="1"/>
</dbReference>
<dbReference type="Pfam" id="PF16745">
    <property type="entry name" value="RsgA_N"/>
    <property type="match status" value="1"/>
</dbReference>
<dbReference type="SUPFAM" id="SSF50249">
    <property type="entry name" value="Nucleic acid-binding proteins"/>
    <property type="match status" value="1"/>
</dbReference>
<dbReference type="SUPFAM" id="SSF52540">
    <property type="entry name" value="P-loop containing nucleoside triphosphate hydrolases"/>
    <property type="match status" value="1"/>
</dbReference>
<dbReference type="PROSITE" id="PS50936">
    <property type="entry name" value="ENGC_GTPASE"/>
    <property type="match status" value="1"/>
</dbReference>
<dbReference type="PROSITE" id="PS51721">
    <property type="entry name" value="G_CP"/>
    <property type="match status" value="1"/>
</dbReference>
<organism>
    <name type="scientific">Lactobacillus johnsonii (strain CNCM I-12250 / La1 / NCC 533)</name>
    <dbReference type="NCBI Taxonomy" id="257314"/>
    <lineage>
        <taxon>Bacteria</taxon>
        <taxon>Bacillati</taxon>
        <taxon>Bacillota</taxon>
        <taxon>Bacilli</taxon>
        <taxon>Lactobacillales</taxon>
        <taxon>Lactobacillaceae</taxon>
        <taxon>Lactobacillus</taxon>
    </lineage>
</organism>
<proteinExistence type="inferred from homology"/>
<protein>
    <recommendedName>
        <fullName evidence="1">Small ribosomal subunit biogenesis GTPase RsgA</fullName>
        <ecNumber evidence="1">3.6.1.-</ecNumber>
    </recommendedName>
</protein>
<evidence type="ECO:0000255" key="1">
    <source>
        <dbReference type="HAMAP-Rule" id="MF_01820"/>
    </source>
</evidence>
<evidence type="ECO:0000255" key="2">
    <source>
        <dbReference type="PROSITE-ProRule" id="PRU01058"/>
    </source>
</evidence>